<gene>
    <name type="ordered locus">Sb05g021340</name>
</gene>
<dbReference type="EMBL" id="CM000764">
    <property type="protein sequence ID" value="EES09915.1"/>
    <property type="molecule type" value="Genomic_DNA"/>
</dbReference>
<dbReference type="RefSeq" id="XP_002450927.1">
    <property type="nucleotide sequence ID" value="XM_002450882.1"/>
</dbReference>
<dbReference type="FunCoup" id="C5Y494">
    <property type="interactions" value="425"/>
</dbReference>
<dbReference type="EnsemblPlants" id="EES09915">
    <property type="protein sequence ID" value="EES09915"/>
    <property type="gene ID" value="SORBI_3005G148900"/>
</dbReference>
<dbReference type="Gramene" id="EES09915">
    <property type="protein sequence ID" value="EES09915"/>
    <property type="gene ID" value="SORBI_3005G148900"/>
</dbReference>
<dbReference type="KEGG" id="sbi:8057026"/>
<dbReference type="eggNOG" id="ENOG502S98H">
    <property type="taxonomic scope" value="Eukaryota"/>
</dbReference>
<dbReference type="HOGENOM" id="CLU_115129_0_1_1"/>
<dbReference type="InParanoid" id="C5Y494"/>
<dbReference type="OMA" id="DAKCNAD"/>
<dbReference type="OrthoDB" id="685197at2759"/>
<dbReference type="Proteomes" id="UP000000768">
    <property type="component" value="Chromosome 5"/>
</dbReference>
<dbReference type="GO" id="GO:0005886">
    <property type="term" value="C:plasma membrane"/>
    <property type="evidence" value="ECO:0007669"/>
    <property type="project" value="UniProtKB-SubCell"/>
</dbReference>
<dbReference type="InterPro" id="IPR006702">
    <property type="entry name" value="CASP_dom"/>
</dbReference>
<dbReference type="PANTHER" id="PTHR33573">
    <property type="entry name" value="CASP-LIKE PROTEIN 4A4"/>
    <property type="match status" value="1"/>
</dbReference>
<dbReference type="PANTHER" id="PTHR33573:SF17">
    <property type="entry name" value="CASP-LIKE PROTEIN 4D1"/>
    <property type="match status" value="1"/>
</dbReference>
<dbReference type="Pfam" id="PF04535">
    <property type="entry name" value="CASP_dom"/>
    <property type="match status" value="1"/>
</dbReference>
<accession>C5Y494</accession>
<sequence>MASRTVLLPSAVLILRLLSLGLLAASLALIAADKLNVDSDPPQRYTFRDVYAYRYVLAVAVIGCAYTLLQLPLAAVSIIASGNNKRGIGAGGGSVAVALLVLVLLADVVFALLLATGAAAGFAFTYDVKRYLDGQFDDDSIGTPEVDKLHRDMDKFFDLAYAAAGLMLAAAACMALVIMLSVYSLARQVRSDYI</sequence>
<protein>
    <recommendedName>
        <fullName>CASP-like protein 4D1</fullName>
        <shortName>SbCASPL4D1</shortName>
    </recommendedName>
</protein>
<comment type="subunit">
    <text evidence="1">Homodimer and heterodimers.</text>
</comment>
<comment type="subcellular location">
    <subcellularLocation>
        <location evidence="1">Cell membrane</location>
        <topology evidence="1">Multi-pass membrane protein</topology>
    </subcellularLocation>
</comment>
<comment type="similarity">
    <text evidence="3">Belongs to the Casparian strip membrane proteins (CASP) family.</text>
</comment>
<keyword id="KW-1003">Cell membrane</keyword>
<keyword id="KW-0472">Membrane</keyword>
<keyword id="KW-1185">Reference proteome</keyword>
<keyword id="KW-0812">Transmembrane</keyword>
<keyword id="KW-1133">Transmembrane helix</keyword>
<evidence type="ECO:0000250" key="1"/>
<evidence type="ECO:0000255" key="2"/>
<evidence type="ECO:0000305" key="3"/>
<organism>
    <name type="scientific">Sorghum bicolor</name>
    <name type="common">Sorghum</name>
    <name type="synonym">Sorghum vulgare</name>
    <dbReference type="NCBI Taxonomy" id="4558"/>
    <lineage>
        <taxon>Eukaryota</taxon>
        <taxon>Viridiplantae</taxon>
        <taxon>Streptophyta</taxon>
        <taxon>Embryophyta</taxon>
        <taxon>Tracheophyta</taxon>
        <taxon>Spermatophyta</taxon>
        <taxon>Magnoliopsida</taxon>
        <taxon>Liliopsida</taxon>
        <taxon>Poales</taxon>
        <taxon>Poaceae</taxon>
        <taxon>PACMAD clade</taxon>
        <taxon>Panicoideae</taxon>
        <taxon>Andropogonodae</taxon>
        <taxon>Andropogoneae</taxon>
        <taxon>Sorghinae</taxon>
        <taxon>Sorghum</taxon>
    </lineage>
</organism>
<name>CSPLC_SORBI</name>
<feature type="chain" id="PRO_0000391542" description="CASP-like protein 4D1">
    <location>
        <begin position="1"/>
        <end position="194"/>
    </location>
</feature>
<feature type="topological domain" description="Cytoplasmic" evidence="2">
    <location>
        <begin position="1"/>
        <end position="10"/>
    </location>
</feature>
<feature type="transmembrane region" description="Helical" evidence="2">
    <location>
        <begin position="11"/>
        <end position="31"/>
    </location>
</feature>
<feature type="topological domain" description="Extracellular" evidence="2">
    <location>
        <begin position="32"/>
        <end position="55"/>
    </location>
</feature>
<feature type="transmembrane region" description="Helical" evidence="2">
    <location>
        <begin position="56"/>
        <end position="76"/>
    </location>
</feature>
<feature type="topological domain" description="Cytoplasmic" evidence="2">
    <location>
        <begin position="77"/>
        <end position="94"/>
    </location>
</feature>
<feature type="transmembrane region" description="Helical" evidence="2">
    <location>
        <begin position="95"/>
        <end position="115"/>
    </location>
</feature>
<feature type="topological domain" description="Extracellular" evidence="2">
    <location>
        <begin position="116"/>
        <end position="161"/>
    </location>
</feature>
<feature type="transmembrane region" description="Helical" evidence="2">
    <location>
        <begin position="162"/>
        <end position="182"/>
    </location>
</feature>
<feature type="topological domain" description="Cytoplasmic" evidence="2">
    <location>
        <begin position="183"/>
        <end position="194"/>
    </location>
</feature>
<reference key="1">
    <citation type="journal article" date="2009" name="Nature">
        <title>The Sorghum bicolor genome and the diversification of grasses.</title>
        <authorList>
            <person name="Paterson A.H."/>
            <person name="Bowers J.E."/>
            <person name="Bruggmann R."/>
            <person name="Dubchak I."/>
            <person name="Grimwood J."/>
            <person name="Gundlach H."/>
            <person name="Haberer G."/>
            <person name="Hellsten U."/>
            <person name="Mitros T."/>
            <person name="Poliakov A."/>
            <person name="Schmutz J."/>
            <person name="Spannagl M."/>
            <person name="Tang H."/>
            <person name="Wang X."/>
            <person name="Wicker T."/>
            <person name="Bharti A.K."/>
            <person name="Chapman J."/>
            <person name="Feltus F.A."/>
            <person name="Gowik U."/>
            <person name="Grigoriev I.V."/>
            <person name="Lyons E."/>
            <person name="Maher C.A."/>
            <person name="Martis M."/>
            <person name="Narechania A."/>
            <person name="Otillar R.P."/>
            <person name="Penning B.W."/>
            <person name="Salamov A.A."/>
            <person name="Wang Y."/>
            <person name="Zhang L."/>
            <person name="Carpita N.C."/>
            <person name="Freeling M."/>
            <person name="Gingle A.R."/>
            <person name="Hash C.T."/>
            <person name="Keller B."/>
            <person name="Klein P."/>
            <person name="Kresovich S."/>
            <person name="McCann M.C."/>
            <person name="Ming R."/>
            <person name="Peterson D.G."/>
            <person name="Mehboob-ur-Rahman M."/>
            <person name="Ware D."/>
            <person name="Westhoff P."/>
            <person name="Mayer K.F.X."/>
            <person name="Messing J."/>
            <person name="Rokhsar D.S."/>
        </authorList>
    </citation>
    <scope>NUCLEOTIDE SEQUENCE [LARGE SCALE GENOMIC DNA]</scope>
    <source>
        <strain>cv. BTx623</strain>
    </source>
</reference>
<reference key="2">
    <citation type="journal article" date="2018" name="Plant J.">
        <title>The Sorghum bicolor reference genome: improved assembly, gene annotations, a transcriptome atlas, and signatures of genome organization.</title>
        <authorList>
            <person name="McCormick R.F."/>
            <person name="Truong S.K."/>
            <person name="Sreedasyam A."/>
            <person name="Jenkins J."/>
            <person name="Shu S."/>
            <person name="Sims D."/>
            <person name="Kennedy M."/>
            <person name="Amirebrahimi M."/>
            <person name="Weers B.D."/>
            <person name="McKinley B."/>
            <person name="Mattison A."/>
            <person name="Morishige D.T."/>
            <person name="Grimwood J."/>
            <person name="Schmutz J."/>
            <person name="Mullet J.E."/>
        </authorList>
    </citation>
    <scope>GENOME REANNOTATION</scope>
    <source>
        <strain>cv. BTx623</strain>
    </source>
</reference>
<reference key="3">
    <citation type="journal article" date="2014" name="Plant Physiol.">
        <title>Functional and evolutionary analysis of the CASPARIAN STRIP MEMBRANE DOMAIN PROTEIN family.</title>
        <authorList>
            <person name="Roppolo D."/>
            <person name="Boeckmann B."/>
            <person name="Pfister A."/>
            <person name="Boutet E."/>
            <person name="Rubio M.C."/>
            <person name="Denervaud-Tendon V."/>
            <person name="Vermeer J.E."/>
            <person name="Gheyselinck J."/>
            <person name="Xenarios I."/>
            <person name="Geldner N."/>
        </authorList>
    </citation>
    <scope>GENE FAMILY</scope>
    <scope>NOMENCLATURE</scope>
</reference>
<proteinExistence type="evidence at transcript level"/>